<dbReference type="EC" id="3.4.21.-" evidence="2"/>
<dbReference type="EC" id="2.7.7.48"/>
<dbReference type="EMBL" id="Y15936">
    <property type="protein sequence ID" value="CAB95006.3"/>
    <property type="status" value="ALT_SEQ"/>
    <property type="molecule type" value="Genomic_RNA"/>
</dbReference>
<dbReference type="SMR" id="Q9JH69"/>
<dbReference type="Proteomes" id="UP000000676">
    <property type="component" value="Segment"/>
</dbReference>
<dbReference type="GO" id="GO:0033644">
    <property type="term" value="C:host cell membrane"/>
    <property type="evidence" value="ECO:0007669"/>
    <property type="project" value="UniProtKB-SubCell"/>
</dbReference>
<dbReference type="GO" id="GO:0016020">
    <property type="term" value="C:membrane"/>
    <property type="evidence" value="ECO:0007669"/>
    <property type="project" value="UniProtKB-KW"/>
</dbReference>
<dbReference type="GO" id="GO:0005524">
    <property type="term" value="F:ATP binding"/>
    <property type="evidence" value="ECO:0007669"/>
    <property type="project" value="UniProtKB-KW"/>
</dbReference>
<dbReference type="GO" id="GO:0003723">
    <property type="term" value="F:RNA binding"/>
    <property type="evidence" value="ECO:0007669"/>
    <property type="project" value="InterPro"/>
</dbReference>
<dbReference type="GO" id="GO:0003968">
    <property type="term" value="F:RNA-directed RNA polymerase activity"/>
    <property type="evidence" value="ECO:0007669"/>
    <property type="project" value="UniProtKB-KW"/>
</dbReference>
<dbReference type="GO" id="GO:0008236">
    <property type="term" value="F:serine-type peptidase activity"/>
    <property type="evidence" value="ECO:0007669"/>
    <property type="project" value="UniProtKB-KW"/>
</dbReference>
<dbReference type="GO" id="GO:0006351">
    <property type="term" value="P:DNA-templated transcription"/>
    <property type="evidence" value="ECO:0007669"/>
    <property type="project" value="InterPro"/>
</dbReference>
<dbReference type="GO" id="GO:0006508">
    <property type="term" value="P:proteolysis"/>
    <property type="evidence" value="ECO:0007669"/>
    <property type="project" value="UniProtKB-KW"/>
</dbReference>
<dbReference type="GO" id="GO:0039694">
    <property type="term" value="P:viral RNA genome replication"/>
    <property type="evidence" value="ECO:0007669"/>
    <property type="project" value="InterPro"/>
</dbReference>
<dbReference type="GO" id="GO:0075523">
    <property type="term" value="P:viral translational frameshifting"/>
    <property type="evidence" value="ECO:0007669"/>
    <property type="project" value="UniProtKB-KW"/>
</dbReference>
<dbReference type="CDD" id="cd23172">
    <property type="entry name" value="ps-ssRNAv_Astroviridae_RdRp"/>
    <property type="match status" value="1"/>
</dbReference>
<dbReference type="Gene3D" id="3.30.70.270">
    <property type="match status" value="1"/>
</dbReference>
<dbReference type="Gene3D" id="2.40.10.10">
    <property type="entry name" value="Trypsin-like serine proteases"/>
    <property type="match status" value="1"/>
</dbReference>
<dbReference type="InterPro" id="IPR045836">
    <property type="entry name" value="Astro_VPg"/>
</dbReference>
<dbReference type="InterPro" id="IPR043502">
    <property type="entry name" value="DNA/RNA_pol_sf"/>
</dbReference>
<dbReference type="InterPro" id="IPR009003">
    <property type="entry name" value="Peptidase_S1_PA"/>
</dbReference>
<dbReference type="InterPro" id="IPR043504">
    <property type="entry name" value="Peptidase_S1_PA_chymotrypsin"/>
</dbReference>
<dbReference type="InterPro" id="IPR043128">
    <property type="entry name" value="Rev_trsase/Diguanyl_cyclase"/>
</dbReference>
<dbReference type="InterPro" id="IPR001205">
    <property type="entry name" value="RNA-dir_pol_C"/>
</dbReference>
<dbReference type="InterPro" id="IPR007094">
    <property type="entry name" value="RNA-dir_pol_PSvirus"/>
</dbReference>
<dbReference type="Pfam" id="PF19416">
    <property type="entry name" value="Astro_VPg"/>
    <property type="match status" value="1"/>
</dbReference>
<dbReference type="Pfam" id="PF00680">
    <property type="entry name" value="RdRP_1"/>
    <property type="match status" value="1"/>
</dbReference>
<dbReference type="SUPFAM" id="SSF56672">
    <property type="entry name" value="DNA/RNA polymerases"/>
    <property type="match status" value="1"/>
</dbReference>
<dbReference type="SUPFAM" id="SSF50494">
    <property type="entry name" value="Trypsin-like serine proteases"/>
    <property type="match status" value="1"/>
</dbReference>
<dbReference type="PROSITE" id="PS50507">
    <property type="entry name" value="RDRP_SSRNA_POS"/>
    <property type="match status" value="1"/>
</dbReference>
<feature type="chain" id="PRO_0000327307" description="Non-structural polyprotein 1AB">
    <location>
        <begin position="1"/>
        <end position="1611"/>
    </location>
</feature>
<feature type="chain" id="PRO_0000327308" description="Protein p19" evidence="4">
    <location>
        <begin position="1"/>
        <end position="168"/>
    </location>
</feature>
<feature type="chain" id="PRO_0000327309" description="Transmembrane protein 1A" evidence="4">
    <location>
        <begin position="169"/>
        <end position="508"/>
    </location>
</feature>
<feature type="chain" id="PRO_0000327310" description="Serine protease p27" evidence="4">
    <location>
        <begin position="509"/>
        <end position="795"/>
    </location>
</feature>
<feature type="chain" id="PRO_0000419592" description="Viral genome-linked protein" evidence="4">
    <location>
        <begin position="796"/>
        <end position="915"/>
    </location>
</feature>
<feature type="chain" id="PRO_0000327311" description="Protein p20" evidence="4">
    <location>
        <begin position="916"/>
        <end position="1027"/>
    </location>
</feature>
<feature type="chain" id="PRO_0000327312" description="RNA-directed RNA polymerase p57" evidence="4">
    <location>
        <begin position="1028"/>
        <end position="1611"/>
    </location>
</feature>
<feature type="transmembrane region" description="Helical" evidence="4">
    <location>
        <begin position="195"/>
        <end position="215"/>
    </location>
</feature>
<feature type="transmembrane region" description="Helical" evidence="4">
    <location>
        <begin position="329"/>
        <end position="348"/>
    </location>
</feature>
<feature type="transmembrane region" description="Helical" evidence="4">
    <location>
        <begin position="353"/>
        <end position="373"/>
    </location>
</feature>
<feature type="transmembrane region" description="Helical" evidence="4">
    <location>
        <begin position="375"/>
        <end position="395"/>
    </location>
</feature>
<feature type="transmembrane region" description="Helical" evidence="4">
    <location>
        <begin position="397"/>
        <end position="417"/>
    </location>
</feature>
<feature type="transmembrane region" description="Helical" evidence="4">
    <location>
        <begin position="426"/>
        <end position="446"/>
    </location>
</feature>
<feature type="transmembrane region" description="Helical" evidence="4">
    <location>
        <begin position="450"/>
        <end position="470"/>
    </location>
</feature>
<feature type="domain" description="RdRp catalytic" evidence="5">
    <location>
        <begin position="1352"/>
        <end position="1486"/>
    </location>
</feature>
<feature type="coiled-coil region" evidence="4">
    <location>
        <begin position="124"/>
        <end position="187"/>
    </location>
</feature>
<feature type="active site" description="Charge relay system; for serine protease activity" evidence="1">
    <location>
        <position position="550"/>
    </location>
</feature>
<feature type="active site" description="Charge relay system; for serine protease activity" evidence="1">
    <location>
        <position position="582"/>
    </location>
</feature>
<feature type="active site" description="Charge relay system; for serine protease activity" evidence="1">
    <location>
        <position position="647"/>
    </location>
</feature>
<feature type="site" description="Cleavage" evidence="4">
    <location>
        <begin position="168"/>
        <end position="169"/>
    </location>
</feature>
<feature type="site" description="Cleavage" evidence="4">
    <location>
        <begin position="508"/>
        <end position="509"/>
    </location>
</feature>
<feature type="site" description="Cleavage" evidence="2">
    <location>
        <begin position="795"/>
        <end position="796"/>
    </location>
</feature>
<feature type="site" description="Cleavage" evidence="4">
    <location>
        <begin position="915"/>
        <end position="916"/>
    </location>
</feature>
<feature type="site" description="Cleavage" evidence="4">
    <location>
        <begin position="1027"/>
        <end position="1028"/>
    </location>
</feature>
<feature type="modified residue" description="O-(5'-phospho-RNA)-tyrosine" evidence="3">
    <location>
        <position position="833"/>
    </location>
</feature>
<keyword id="KW-0067">ATP-binding</keyword>
<keyword id="KW-0175">Coiled coil</keyword>
<keyword id="KW-0191">Covalent protein-RNA linkage</keyword>
<keyword id="KW-1043">Host membrane</keyword>
<keyword id="KW-0378">Hydrolase</keyword>
<keyword id="KW-0472">Membrane</keyword>
<keyword id="KW-0547">Nucleotide-binding</keyword>
<keyword id="KW-0548">Nucleotidyltransferase</keyword>
<keyword id="KW-0597">Phosphoprotein</keyword>
<keyword id="KW-0645">Protease</keyword>
<keyword id="KW-1185">Reference proteome</keyword>
<keyword id="KW-0688">Ribosomal frameshifting</keyword>
<keyword id="KW-0696">RNA-directed RNA polymerase</keyword>
<keyword id="KW-0720">Serine protease</keyword>
<keyword id="KW-0808">Transferase</keyword>
<keyword id="KW-0812">Transmembrane</keyword>
<keyword id="KW-1133">Transmembrane helix</keyword>
<keyword id="KW-0693">Viral RNA replication</keyword>
<comment type="function">
    <molecule>Serine protease p27</molecule>
    <text evidence="2">Responsible for the cleavage of the polyprotein into functional products.</text>
</comment>
<comment type="function">
    <molecule>Viral genome-linked protein</molecule>
    <text evidence="3">Protein covalently attached to the 5' extremity of the genomic and subgenomic RNAs (By similarity). It may serve as a primer for the replicase (By similarity).</text>
</comment>
<comment type="catalytic activity">
    <reaction evidence="5">
        <text>RNA(n) + a ribonucleoside 5'-triphosphate = RNA(n+1) + diphosphate</text>
        <dbReference type="Rhea" id="RHEA:21248"/>
        <dbReference type="Rhea" id="RHEA-COMP:14527"/>
        <dbReference type="Rhea" id="RHEA-COMP:17342"/>
        <dbReference type="ChEBI" id="CHEBI:33019"/>
        <dbReference type="ChEBI" id="CHEBI:61557"/>
        <dbReference type="ChEBI" id="CHEBI:140395"/>
        <dbReference type="EC" id="2.7.7.48"/>
    </reaction>
</comment>
<comment type="subunit">
    <molecule>Serine protease p27</molecule>
    <text evidence="2">Monomer.</text>
</comment>
<comment type="subcellular location">
    <molecule>Transmembrane protein 1A</molecule>
    <subcellularLocation>
        <location evidence="6">Host membrane</location>
        <topology evidence="6">Multi-pass membrane protein</topology>
    </subcellularLocation>
</comment>
<comment type="alternative products">
    <event type="ribosomal frameshifting"/>
    <isoform>
        <id>Q9JH69-1</id>
        <name>nsp1ab</name>
        <sequence type="displayed"/>
    </isoform>
    <isoform>
        <id>Q9JH70-1</id>
        <name>nsp1a</name>
        <sequence type="external"/>
    </isoform>
</comment>
<comment type="PTM">
    <text evidence="2">Cleaved by the viral and host proteases (By similarity). The protease is probably autocatalytically cleaved (By similarity).</text>
</comment>
<comment type="miscellaneous">
    <molecule>Isoform nsp1ab</molecule>
    <text>Generated by a ribosomal frameshift at position 1099.</text>
</comment>
<comment type="similarity">
    <text evidence="6">Belongs to the astroviridae polyprotein 1AB family.</text>
</comment>
<proteinExistence type="inferred from homology"/>
<accession>Q9JH69</accession>
<organism>
    <name type="scientific">Turkey astrovirus 1</name>
    <name type="common">TAstV-1</name>
    <dbReference type="NCBI Taxonomy" id="364370"/>
    <lineage>
        <taxon>Viruses</taxon>
        <taxon>Riboviria</taxon>
        <taxon>Orthornavirae</taxon>
        <taxon>Pisuviricota</taxon>
        <taxon>Stelpaviricetes</taxon>
        <taxon>Stellavirales</taxon>
        <taxon>Astroviridae</taxon>
        <taxon>Avastrovirus</taxon>
        <taxon>Avastrovirus 1</taxon>
    </lineage>
</organism>
<gene>
    <name type="primary">ORF1</name>
</gene>
<organismHost>
    <name type="scientific">Meleagris gallopavo</name>
    <name type="common">Wild turkey</name>
    <dbReference type="NCBI Taxonomy" id="9103"/>
</organismHost>
<evidence type="ECO:0000250" key="1"/>
<evidence type="ECO:0000250" key="2">
    <source>
        <dbReference type="UniProtKB" id="P0C6K4"/>
    </source>
</evidence>
<evidence type="ECO:0000250" key="3">
    <source>
        <dbReference type="UniProtKB" id="Q3ZN07"/>
    </source>
</evidence>
<evidence type="ECO:0000255" key="4"/>
<evidence type="ECO:0000255" key="5">
    <source>
        <dbReference type="PROSITE-ProRule" id="PRU00539"/>
    </source>
</evidence>
<evidence type="ECO:0000305" key="6"/>
<reference key="1">
    <citation type="journal article" date="2003" name="Virus Res.">
        <title>Complete genomic sequences of astroviruses from sheep and turkey: comparison with related viruses.</title>
        <authorList>
            <person name="Jonassen C.M."/>
            <person name="Jonassen T.O."/>
            <person name="Sveen T.M."/>
            <person name="Grinde B."/>
        </authorList>
    </citation>
    <scope>NUCLEOTIDE SEQUENCE [GENOMIC RNA]</scope>
</reference>
<protein>
    <recommendedName>
        <fullName>Non-structural polyprotein 1AB</fullName>
    </recommendedName>
    <component>
        <recommendedName>
            <fullName>Protein p19</fullName>
        </recommendedName>
    </component>
    <component>
        <recommendedName>
            <fullName>Transmembrane protein 1A</fullName>
        </recommendedName>
    </component>
    <component>
        <recommendedName>
            <fullName>Serine protease p27</fullName>
            <shortName>p27</shortName>
            <ecNumber evidence="2">3.4.21.-</ecNumber>
        </recommendedName>
    </component>
    <component>
        <recommendedName>
            <fullName>Viral genome-linked protein</fullName>
        </recommendedName>
        <alternativeName>
            <fullName>VPg</fullName>
        </alternativeName>
    </component>
    <component>
        <recommendedName>
            <fullName>Protein p20</fullName>
        </recommendedName>
    </component>
    <component>
        <recommendedName>
            <fullName>RNA-directed RNA polymerase p57</fullName>
            <shortName>p57</shortName>
            <ecNumber>2.7.7.48</ecNumber>
        </recommendedName>
    </component>
</protein>
<name>NS1AB_TASV1</name>
<sequence length="1611" mass="183203">MAAAAASALGASAPKALAPADGPIVAGLDKLVNLEGVHDLFEAMRGAYGEDPAWKGLMSCDVVYLKDITTAIGVKDTSVGIFRKFSDGCSWCPTGAECFLSMKDLAYMKAQSAKAQRLTASLATTSNLIARAMRAESELKRARDEERKVDARYKDILEHSLAARKALQKELDETRERELHLLKELGKRSSIRTKAFSFFDWLFMAVVFFLFLHYTSAECVKPDFGCLVVNSNLPVPSLTFHDVMARCYNTFGNIVLSSQIDAARLREECEQSANKFLGTHIGDPAHKVWCENRLETLIPVECDSSEFLEIFTSNLNAFMVSVSQFYKTISYYKLDALVTFAFSAALATNKLKMVMVLPLLLVALYLNVPPITVTIASVIFQPLILPFVGFQLVFPNFLPYNLFVAWVWMVCQAFFSSDGVKLLVSVSTALVQVVFLAVWSISVIVLQQLSIPMVAQILLFVATLTVSVGVKFANSTITVVHPDGNTEKVSRVTLVRQSMAKRISQIKQSLTIRGVIPSGPNRFDSIVVVEGQGGSGVGWRFMNSIFTAGHVVQGSKFVTIKSESTQVKVKVKRVIDLFECVDTLVEIPLTKEFQHIKPLRLAKKVEDSYLQLCAFKPDMVEKASYQGWCTIDSGFIFNSFNTQFGNSGAPYVDSDGRLVGMHLGSQGVISQGVVLVDTLKTQFLAQQSQIDDQLMERIIEGTKVSHAAILTELDRMRTKVEEVALVSARVNQLESQLKDLYEFSSNSIKCLSDDIEKMVCAQLFDEINLQSVMEKISALPPTEKLAKLVEVFVEQKKKGKTKRTARGGKHALGKKYLSKAHFSRMRMLTEEEYNKMVEDGFSPDEIKEVVDQLREQAWQNYLIDNDIGEDDDLDWYDDMLEDERLNEEIDRRVEAALEDRGELAYQKIRRTFVDQALIHLITLKKGNWQTTKVECQPEREEAYKEQFQKAVKQEDLTEGTSYAIYSAGDATILIENKEIDHTEIKPVTTGAKTVQEYPKDARTTVATFDDNKKDIVKTKRTTEIVLEQRKKTCRTCGETRPHNHKMCRDRHTRRFCFWCGVVHSDVEGHSRDLKCPKCSAGFANLREMEQHAVTTCSKKLDSHPEPSRVFQPLDFGLGIFDWRFDLQPIRHHVAVPMNVEVLGYIPVDRLVERRNVITDPLLKLVEPWRQETYGPAVWTIKAYNKMFEKFFYSEPLEFAQLDSSILNLADSYCLQEHDYMSGSQIVPITSTEKNLDSTPGYPKFKVFSTEREYLSTCGWDEYKTVWQVGPREKPLWWCFLKTEVLKLAKIEQDDIRMILCTDPVFTRIGAAFEQHQNSLMKLETENHHAQVGWSPFFGGIHRRATRLYGEHRYYVELDWTRFDGTIPPELFRRIKLMRFFLLDPKYKTPENRDRYNWYVENLIDKVVLLPTGEVCKIYGGNPSGQFSTTVDNNFVNVWLTVFELAYLFYKEHNRLPTICEIKKHTDWICYGDDRLLAVDKRFINSYDTAAVIAMYKDVFGMWVKPDNIKVFPSLEGVSFCGMVWTKRKGQYVGKPNVDKILSTLSDPVSRLPDIQSLWGKLVSLRLLCENESDEVVDYLDKQIESVSRHAKEAGIALPKIGPDFYAEIWID</sequence>